<sequence length="346" mass="37872">MTEQRTIASSATREDEAADASIRPKRLADYLGQQPVRDQMEIYIQAAKARGEAMDHVLIFGPPGLGKTTLSHVIANELGVSLRVTSGPVIEKAGDLAALLTNLQPHDVLFIDEIHRLSPVVEEVLYPAMEDFQIDIMIGDGPAARSIKIDLPPFTLIGATTRAGLLTAPLRDRFGIVQRLEFYSPQELTRIVIRSAAILGIDCTPDGAAEIARRARGTPRIANRLLRRVRDFAQVKAAGHIDLAVAQAAMQMLKVDPEGFDELDRRMLRTIVDHFDGGPVGVESLAASLSEERGTLEDVIEPYLIQQGFLIRTARGRMVTPKAYLHLGLKPPRDRAPAIGEPGDLF</sequence>
<organism>
    <name type="scientific">Xanthomonas campestris pv. campestris (strain B100)</name>
    <dbReference type="NCBI Taxonomy" id="509169"/>
    <lineage>
        <taxon>Bacteria</taxon>
        <taxon>Pseudomonadati</taxon>
        <taxon>Pseudomonadota</taxon>
        <taxon>Gammaproteobacteria</taxon>
        <taxon>Lysobacterales</taxon>
        <taxon>Lysobacteraceae</taxon>
        <taxon>Xanthomonas</taxon>
    </lineage>
</organism>
<dbReference type="EC" id="3.6.4.-" evidence="1"/>
<dbReference type="EMBL" id="AM920689">
    <property type="protein sequence ID" value="CAP50522.1"/>
    <property type="molecule type" value="Genomic_DNA"/>
</dbReference>
<dbReference type="SMR" id="B0RPY7"/>
<dbReference type="KEGG" id="xca:xcc-b100_1174"/>
<dbReference type="HOGENOM" id="CLU_055599_1_0_6"/>
<dbReference type="Proteomes" id="UP000001188">
    <property type="component" value="Chromosome"/>
</dbReference>
<dbReference type="GO" id="GO:0005737">
    <property type="term" value="C:cytoplasm"/>
    <property type="evidence" value="ECO:0007669"/>
    <property type="project" value="UniProtKB-SubCell"/>
</dbReference>
<dbReference type="GO" id="GO:0048476">
    <property type="term" value="C:Holliday junction resolvase complex"/>
    <property type="evidence" value="ECO:0007669"/>
    <property type="project" value="UniProtKB-UniRule"/>
</dbReference>
<dbReference type="GO" id="GO:0005524">
    <property type="term" value="F:ATP binding"/>
    <property type="evidence" value="ECO:0007669"/>
    <property type="project" value="UniProtKB-UniRule"/>
</dbReference>
<dbReference type="GO" id="GO:0016887">
    <property type="term" value="F:ATP hydrolysis activity"/>
    <property type="evidence" value="ECO:0007669"/>
    <property type="project" value="InterPro"/>
</dbReference>
<dbReference type="GO" id="GO:0000400">
    <property type="term" value="F:four-way junction DNA binding"/>
    <property type="evidence" value="ECO:0007669"/>
    <property type="project" value="UniProtKB-UniRule"/>
</dbReference>
<dbReference type="GO" id="GO:0009378">
    <property type="term" value="F:four-way junction helicase activity"/>
    <property type="evidence" value="ECO:0007669"/>
    <property type="project" value="InterPro"/>
</dbReference>
<dbReference type="GO" id="GO:0006310">
    <property type="term" value="P:DNA recombination"/>
    <property type="evidence" value="ECO:0007669"/>
    <property type="project" value="UniProtKB-UniRule"/>
</dbReference>
<dbReference type="GO" id="GO:0006281">
    <property type="term" value="P:DNA repair"/>
    <property type="evidence" value="ECO:0007669"/>
    <property type="project" value="UniProtKB-UniRule"/>
</dbReference>
<dbReference type="CDD" id="cd00009">
    <property type="entry name" value="AAA"/>
    <property type="match status" value="1"/>
</dbReference>
<dbReference type="FunFam" id="3.40.50.300:FF:000073">
    <property type="entry name" value="Holliday junction ATP-dependent DNA helicase RuvB"/>
    <property type="match status" value="1"/>
</dbReference>
<dbReference type="Gene3D" id="1.10.8.60">
    <property type="match status" value="1"/>
</dbReference>
<dbReference type="Gene3D" id="3.40.50.300">
    <property type="entry name" value="P-loop containing nucleotide triphosphate hydrolases"/>
    <property type="match status" value="1"/>
</dbReference>
<dbReference type="Gene3D" id="1.10.10.10">
    <property type="entry name" value="Winged helix-like DNA-binding domain superfamily/Winged helix DNA-binding domain"/>
    <property type="match status" value="1"/>
</dbReference>
<dbReference type="HAMAP" id="MF_00016">
    <property type="entry name" value="DNA_HJ_migration_RuvB"/>
    <property type="match status" value="1"/>
</dbReference>
<dbReference type="InterPro" id="IPR003593">
    <property type="entry name" value="AAA+_ATPase"/>
</dbReference>
<dbReference type="InterPro" id="IPR041445">
    <property type="entry name" value="AAA_lid_4"/>
</dbReference>
<dbReference type="InterPro" id="IPR004605">
    <property type="entry name" value="DNA_helicase_Holl-junc_RuvB"/>
</dbReference>
<dbReference type="InterPro" id="IPR027417">
    <property type="entry name" value="P-loop_NTPase"/>
</dbReference>
<dbReference type="InterPro" id="IPR008824">
    <property type="entry name" value="RuvB-like_N"/>
</dbReference>
<dbReference type="InterPro" id="IPR008823">
    <property type="entry name" value="RuvB_C"/>
</dbReference>
<dbReference type="InterPro" id="IPR036388">
    <property type="entry name" value="WH-like_DNA-bd_sf"/>
</dbReference>
<dbReference type="InterPro" id="IPR036390">
    <property type="entry name" value="WH_DNA-bd_sf"/>
</dbReference>
<dbReference type="NCBIfam" id="NF000868">
    <property type="entry name" value="PRK00080.1"/>
    <property type="match status" value="1"/>
</dbReference>
<dbReference type="NCBIfam" id="TIGR00635">
    <property type="entry name" value="ruvB"/>
    <property type="match status" value="1"/>
</dbReference>
<dbReference type="PANTHER" id="PTHR42848">
    <property type="match status" value="1"/>
</dbReference>
<dbReference type="PANTHER" id="PTHR42848:SF1">
    <property type="entry name" value="HOLLIDAY JUNCTION BRANCH MIGRATION COMPLEX SUBUNIT RUVB"/>
    <property type="match status" value="1"/>
</dbReference>
<dbReference type="Pfam" id="PF17864">
    <property type="entry name" value="AAA_lid_4"/>
    <property type="match status" value="1"/>
</dbReference>
<dbReference type="Pfam" id="PF05491">
    <property type="entry name" value="RuvB_C"/>
    <property type="match status" value="1"/>
</dbReference>
<dbReference type="Pfam" id="PF05496">
    <property type="entry name" value="RuvB_N"/>
    <property type="match status" value="1"/>
</dbReference>
<dbReference type="SMART" id="SM00382">
    <property type="entry name" value="AAA"/>
    <property type="match status" value="1"/>
</dbReference>
<dbReference type="SUPFAM" id="SSF52540">
    <property type="entry name" value="P-loop containing nucleoside triphosphate hydrolases"/>
    <property type="match status" value="1"/>
</dbReference>
<dbReference type="SUPFAM" id="SSF46785">
    <property type="entry name" value="Winged helix' DNA-binding domain"/>
    <property type="match status" value="1"/>
</dbReference>
<protein>
    <recommendedName>
        <fullName evidence="1">Holliday junction branch migration complex subunit RuvB</fullName>
        <ecNumber evidence="1">3.6.4.-</ecNumber>
    </recommendedName>
</protein>
<feature type="chain" id="PRO_1000089694" description="Holliday junction branch migration complex subunit RuvB">
    <location>
        <begin position="1"/>
        <end position="346"/>
    </location>
</feature>
<feature type="region of interest" description="Large ATPase domain (RuvB-L)" evidence="1">
    <location>
        <begin position="1"/>
        <end position="183"/>
    </location>
</feature>
<feature type="region of interest" description="Disordered" evidence="2">
    <location>
        <begin position="1"/>
        <end position="20"/>
    </location>
</feature>
<feature type="region of interest" description="Small ATPAse domain (RuvB-S)" evidence="1">
    <location>
        <begin position="184"/>
        <end position="254"/>
    </location>
</feature>
<feature type="region of interest" description="Head domain (RuvB-H)" evidence="1">
    <location>
        <begin position="257"/>
        <end position="346"/>
    </location>
</feature>
<feature type="compositionally biased region" description="Polar residues" evidence="2">
    <location>
        <begin position="1"/>
        <end position="11"/>
    </location>
</feature>
<feature type="binding site" evidence="1">
    <location>
        <position position="22"/>
    </location>
    <ligand>
        <name>ATP</name>
        <dbReference type="ChEBI" id="CHEBI:30616"/>
    </ligand>
</feature>
<feature type="binding site" evidence="1">
    <location>
        <position position="23"/>
    </location>
    <ligand>
        <name>ATP</name>
        <dbReference type="ChEBI" id="CHEBI:30616"/>
    </ligand>
</feature>
<feature type="binding site" evidence="1">
    <location>
        <position position="64"/>
    </location>
    <ligand>
        <name>ATP</name>
        <dbReference type="ChEBI" id="CHEBI:30616"/>
    </ligand>
</feature>
<feature type="binding site" evidence="1">
    <location>
        <position position="67"/>
    </location>
    <ligand>
        <name>ATP</name>
        <dbReference type="ChEBI" id="CHEBI:30616"/>
    </ligand>
</feature>
<feature type="binding site" evidence="1">
    <location>
        <position position="68"/>
    </location>
    <ligand>
        <name>ATP</name>
        <dbReference type="ChEBI" id="CHEBI:30616"/>
    </ligand>
</feature>
<feature type="binding site" evidence="1">
    <location>
        <position position="68"/>
    </location>
    <ligand>
        <name>Mg(2+)</name>
        <dbReference type="ChEBI" id="CHEBI:18420"/>
    </ligand>
</feature>
<feature type="binding site" evidence="1">
    <location>
        <position position="69"/>
    </location>
    <ligand>
        <name>ATP</name>
        <dbReference type="ChEBI" id="CHEBI:30616"/>
    </ligand>
</feature>
<feature type="binding site" evidence="1">
    <location>
        <begin position="130"/>
        <end position="132"/>
    </location>
    <ligand>
        <name>ATP</name>
        <dbReference type="ChEBI" id="CHEBI:30616"/>
    </ligand>
</feature>
<feature type="binding site" evidence="1">
    <location>
        <position position="173"/>
    </location>
    <ligand>
        <name>ATP</name>
        <dbReference type="ChEBI" id="CHEBI:30616"/>
    </ligand>
</feature>
<feature type="binding site" evidence="1">
    <location>
        <position position="183"/>
    </location>
    <ligand>
        <name>ATP</name>
        <dbReference type="ChEBI" id="CHEBI:30616"/>
    </ligand>
</feature>
<feature type="binding site" evidence="1">
    <location>
        <position position="220"/>
    </location>
    <ligand>
        <name>ATP</name>
        <dbReference type="ChEBI" id="CHEBI:30616"/>
    </ligand>
</feature>
<feature type="binding site" evidence="1">
    <location>
        <position position="293"/>
    </location>
    <ligand>
        <name>DNA</name>
        <dbReference type="ChEBI" id="CHEBI:16991"/>
    </ligand>
</feature>
<feature type="binding site" evidence="1">
    <location>
        <position position="312"/>
    </location>
    <ligand>
        <name>DNA</name>
        <dbReference type="ChEBI" id="CHEBI:16991"/>
    </ligand>
</feature>
<feature type="binding site" evidence="1">
    <location>
        <position position="317"/>
    </location>
    <ligand>
        <name>DNA</name>
        <dbReference type="ChEBI" id="CHEBI:16991"/>
    </ligand>
</feature>
<gene>
    <name evidence="1" type="primary">ruvB</name>
    <name type="ordered locus">xcc-b100_1174</name>
</gene>
<evidence type="ECO:0000255" key="1">
    <source>
        <dbReference type="HAMAP-Rule" id="MF_00016"/>
    </source>
</evidence>
<evidence type="ECO:0000256" key="2">
    <source>
        <dbReference type="SAM" id="MobiDB-lite"/>
    </source>
</evidence>
<keyword id="KW-0067">ATP-binding</keyword>
<keyword id="KW-0963">Cytoplasm</keyword>
<keyword id="KW-0227">DNA damage</keyword>
<keyword id="KW-0233">DNA recombination</keyword>
<keyword id="KW-0234">DNA repair</keyword>
<keyword id="KW-0238">DNA-binding</keyword>
<keyword id="KW-0378">Hydrolase</keyword>
<keyword id="KW-0547">Nucleotide-binding</keyword>
<name>RUVB_XANCB</name>
<comment type="function">
    <text evidence="1">The RuvA-RuvB-RuvC complex processes Holliday junction (HJ) DNA during genetic recombination and DNA repair, while the RuvA-RuvB complex plays an important role in the rescue of blocked DNA replication forks via replication fork reversal (RFR). RuvA specifically binds to HJ cruciform DNA, conferring on it an open structure. The RuvB hexamer acts as an ATP-dependent pump, pulling dsDNA into and through the RuvAB complex. RuvB forms 2 homohexamers on either side of HJ DNA bound by 1 or 2 RuvA tetramers; 4 subunits per hexamer contact DNA at a time. Coordinated motions by a converter formed by DNA-disengaged RuvB subunits stimulates ATP hydrolysis and nucleotide exchange. Immobilization of the converter enables RuvB to convert the ATP-contained energy into a lever motion, pulling 2 nucleotides of DNA out of the RuvA tetramer per ATP hydrolyzed, thus driving DNA branch migration. The RuvB motors rotate together with the DNA substrate, which together with the progressing nucleotide cycle form the mechanistic basis for DNA recombination by continuous HJ branch migration. Branch migration allows RuvC to scan DNA until it finds its consensus sequence, where it cleaves and resolves cruciform DNA.</text>
</comment>
<comment type="catalytic activity">
    <reaction evidence="1">
        <text>ATP + H2O = ADP + phosphate + H(+)</text>
        <dbReference type="Rhea" id="RHEA:13065"/>
        <dbReference type="ChEBI" id="CHEBI:15377"/>
        <dbReference type="ChEBI" id="CHEBI:15378"/>
        <dbReference type="ChEBI" id="CHEBI:30616"/>
        <dbReference type="ChEBI" id="CHEBI:43474"/>
        <dbReference type="ChEBI" id="CHEBI:456216"/>
    </reaction>
</comment>
<comment type="subunit">
    <text evidence="1">Homohexamer. Forms an RuvA(8)-RuvB(12)-Holliday junction (HJ) complex. HJ DNA is sandwiched between 2 RuvA tetramers; dsDNA enters through RuvA and exits via RuvB. An RuvB hexamer assembles on each DNA strand where it exits the tetramer. Each RuvB hexamer is contacted by two RuvA subunits (via domain III) on 2 adjacent RuvB subunits; this complex drives branch migration. In the full resolvosome a probable DNA-RuvA(4)-RuvB(12)-RuvC(2) complex forms which resolves the HJ.</text>
</comment>
<comment type="subcellular location">
    <subcellularLocation>
        <location evidence="1">Cytoplasm</location>
    </subcellularLocation>
</comment>
<comment type="domain">
    <text evidence="1">Has 3 domains, the large (RuvB-L) and small ATPase (RuvB-S) domains and the C-terminal head (RuvB-H) domain. The head domain binds DNA, while the ATPase domains jointly bind ATP, ADP or are empty depending on the state of the subunit in the translocation cycle. During a single DNA translocation step the structure of each domain remains the same, but their relative positions change.</text>
</comment>
<comment type="similarity">
    <text evidence="1">Belongs to the RuvB family.</text>
</comment>
<reference key="1">
    <citation type="journal article" date="2008" name="J. Biotechnol.">
        <title>The genome of Xanthomonas campestris pv. campestris B100 and its use for the reconstruction of metabolic pathways involved in xanthan biosynthesis.</title>
        <authorList>
            <person name="Vorhoelter F.-J."/>
            <person name="Schneiker S."/>
            <person name="Goesmann A."/>
            <person name="Krause L."/>
            <person name="Bekel T."/>
            <person name="Kaiser O."/>
            <person name="Linke B."/>
            <person name="Patschkowski T."/>
            <person name="Rueckert C."/>
            <person name="Schmid J."/>
            <person name="Sidhu V.K."/>
            <person name="Sieber V."/>
            <person name="Tauch A."/>
            <person name="Watt S.A."/>
            <person name="Weisshaar B."/>
            <person name="Becker A."/>
            <person name="Niehaus K."/>
            <person name="Puehler A."/>
        </authorList>
    </citation>
    <scope>NUCLEOTIDE SEQUENCE [LARGE SCALE GENOMIC DNA]</scope>
    <source>
        <strain>B100</strain>
    </source>
</reference>
<proteinExistence type="inferred from homology"/>
<accession>B0RPY7</accession>